<organism>
    <name type="scientific">Homo sapiens</name>
    <name type="common">Human</name>
    <dbReference type="NCBI Taxonomy" id="9606"/>
    <lineage>
        <taxon>Eukaryota</taxon>
        <taxon>Metazoa</taxon>
        <taxon>Chordata</taxon>
        <taxon>Craniata</taxon>
        <taxon>Vertebrata</taxon>
        <taxon>Euteleostomi</taxon>
        <taxon>Mammalia</taxon>
        <taxon>Eutheria</taxon>
        <taxon>Euarchontoglires</taxon>
        <taxon>Primates</taxon>
        <taxon>Haplorrhini</taxon>
        <taxon>Catarrhini</taxon>
        <taxon>Hominidae</taxon>
        <taxon>Homo</taxon>
    </lineage>
</organism>
<evidence type="ECO:0000250" key="1">
    <source>
        <dbReference type="UniProtKB" id="A0A0D2UG83"/>
    </source>
</evidence>
<evidence type="ECO:0000250" key="2">
    <source>
        <dbReference type="UniProtKB" id="P0C0S5"/>
    </source>
</evidence>
<evidence type="ECO:0000250" key="3">
    <source>
        <dbReference type="UniProtKB" id="Q9QZQ8"/>
    </source>
</evidence>
<evidence type="ECO:0000255" key="4">
    <source>
        <dbReference type="PROSITE-ProRule" id="PRU00490"/>
    </source>
</evidence>
<evidence type="ECO:0000256" key="5">
    <source>
        <dbReference type="SAM" id="MobiDB-lite"/>
    </source>
</evidence>
<evidence type="ECO:0000269" key="6">
    <source>
    </source>
</evidence>
<evidence type="ECO:0000269" key="7">
    <source>
    </source>
</evidence>
<evidence type="ECO:0000269" key="8">
    <source>
    </source>
</evidence>
<evidence type="ECO:0000269" key="9">
    <source>
    </source>
</evidence>
<evidence type="ECO:0000269" key="10">
    <source>
    </source>
</evidence>
<evidence type="ECO:0000269" key="11">
    <source>
    </source>
</evidence>
<evidence type="ECO:0000269" key="12">
    <source>
    </source>
</evidence>
<evidence type="ECO:0000269" key="13">
    <source>
    </source>
</evidence>
<evidence type="ECO:0000269" key="14">
    <source>
    </source>
</evidence>
<evidence type="ECO:0000269" key="15">
    <source>
    </source>
</evidence>
<evidence type="ECO:0000269" key="16">
    <source>
    </source>
</evidence>
<evidence type="ECO:0000269" key="17">
    <source>
    </source>
</evidence>
<evidence type="ECO:0000269" key="18">
    <source>
    </source>
</evidence>
<evidence type="ECO:0000269" key="19">
    <source>
    </source>
</evidence>
<evidence type="ECO:0000269" key="20">
    <source>
    </source>
</evidence>
<evidence type="ECO:0000303" key="21">
    <source>
    </source>
</evidence>
<evidence type="ECO:0000303" key="22">
    <source>
    </source>
</evidence>
<evidence type="ECO:0000303" key="23">
    <source>
    </source>
</evidence>
<evidence type="ECO:0000303" key="24">
    <source>
    </source>
</evidence>
<evidence type="ECO:0000303" key="25">
    <source>
    </source>
</evidence>
<evidence type="ECO:0000303" key="26">
    <source>
    </source>
</evidence>
<evidence type="ECO:0000305" key="27"/>
<evidence type="ECO:0000305" key="28">
    <source>
    </source>
</evidence>
<evidence type="ECO:0000312" key="29">
    <source>
        <dbReference type="HGNC" id="HGNC:4740"/>
    </source>
</evidence>
<evidence type="ECO:0007744" key="30">
    <source>
    </source>
</evidence>
<evidence type="ECO:0007744" key="31">
    <source>
    </source>
</evidence>
<evidence type="ECO:0007744" key="32">
    <source>
    </source>
</evidence>
<evidence type="ECO:0007744" key="33">
    <source>
    </source>
</evidence>
<evidence type="ECO:0007744" key="34">
    <source>
    </source>
</evidence>
<evidence type="ECO:0007744" key="35">
    <source>
    </source>
</evidence>
<evidence type="ECO:0007744" key="36">
    <source>
    </source>
</evidence>
<evidence type="ECO:0007744" key="37">
    <source>
    </source>
</evidence>
<evidence type="ECO:0007829" key="38">
    <source>
        <dbReference type="PDB" id="1U35"/>
    </source>
</evidence>
<evidence type="ECO:0007829" key="39">
    <source>
        <dbReference type="PDB" id="1ZR3"/>
    </source>
</evidence>
<evidence type="ECO:0007829" key="40">
    <source>
        <dbReference type="PDB" id="1ZR5"/>
    </source>
</evidence>
<evidence type="ECO:0007829" key="41">
    <source>
        <dbReference type="PDB" id="2F8N"/>
    </source>
</evidence>
<evidence type="ECO:0007829" key="42">
    <source>
        <dbReference type="PDB" id="2FXK"/>
    </source>
</evidence>
<evidence type="ECO:0007829" key="43">
    <source>
        <dbReference type="PDB" id="3IVB"/>
    </source>
</evidence>
<accession>O75367</accession>
<accession>O75377</accession>
<accession>Q503A8</accession>
<accession>Q7Z5E3</accession>
<accession>Q96D41</accession>
<accession>Q9H8P3</accession>
<accession>Q9UP96</accession>
<dbReference type="EMBL" id="AF041483">
    <property type="protein sequence ID" value="AAC33433.1"/>
    <property type="molecule type" value="mRNA"/>
</dbReference>
<dbReference type="EMBL" id="AF044286">
    <property type="protein sequence ID" value="AAC33434.1"/>
    <property type="molecule type" value="mRNA"/>
</dbReference>
<dbReference type="EMBL" id="AF054174">
    <property type="protein sequence ID" value="AAC39908.1"/>
    <property type="molecule type" value="mRNA"/>
</dbReference>
<dbReference type="EMBL" id="AK023409">
    <property type="protein sequence ID" value="BAB14565.1"/>
    <property type="molecule type" value="mRNA"/>
</dbReference>
<dbReference type="EMBL" id="AC026691">
    <property type="status" value="NOT_ANNOTATED_CDS"/>
    <property type="molecule type" value="Genomic_DNA"/>
</dbReference>
<dbReference type="EMBL" id="BC013331">
    <property type="protein sequence ID" value="AAH13331.1"/>
    <property type="molecule type" value="mRNA"/>
</dbReference>
<dbReference type="EMBL" id="BC095406">
    <property type="protein sequence ID" value="AAH95406.1"/>
    <property type="molecule type" value="mRNA"/>
</dbReference>
<dbReference type="EMBL" id="AY134746">
    <property type="protein sequence ID" value="AAN08620.1"/>
    <property type="molecule type" value="mRNA"/>
</dbReference>
<dbReference type="CCDS" id="CCDS4183.1">
    <molecule id="O75367-3"/>
</dbReference>
<dbReference type="CCDS" id="CCDS4184.1">
    <molecule id="O75367-2"/>
</dbReference>
<dbReference type="CCDS" id="CCDS4185.1">
    <molecule id="O75367-1"/>
</dbReference>
<dbReference type="RefSeq" id="NP_001035248.1">
    <molecule id="O75367-3"/>
    <property type="nucleotide sequence ID" value="NM_001040158.2"/>
</dbReference>
<dbReference type="RefSeq" id="NP_001387330.1">
    <molecule id="O75367-1"/>
    <property type="nucleotide sequence ID" value="NM_001400401.1"/>
</dbReference>
<dbReference type="RefSeq" id="NP_001387331.1">
    <molecule id="O75367-1"/>
    <property type="nucleotide sequence ID" value="NM_001400402.1"/>
</dbReference>
<dbReference type="RefSeq" id="NP_004884.1">
    <molecule id="O75367-3"/>
    <property type="nucleotide sequence ID" value="NM_004893.3"/>
</dbReference>
<dbReference type="RefSeq" id="NP_613075.1">
    <molecule id="O75367-2"/>
    <property type="nucleotide sequence ID" value="NM_138609.3"/>
</dbReference>
<dbReference type="RefSeq" id="NP_613258.2">
    <molecule id="O75367-1"/>
    <property type="nucleotide sequence ID" value="NM_138610.3"/>
</dbReference>
<dbReference type="RefSeq" id="XP_011542031.1">
    <property type="nucleotide sequence ID" value="XM_011543729.2"/>
</dbReference>
<dbReference type="RefSeq" id="XP_011542032.1">
    <molecule id="O75367-3"/>
    <property type="nucleotide sequence ID" value="XM_011543730.4"/>
</dbReference>
<dbReference type="RefSeq" id="XP_054209808.1">
    <molecule id="O75367-3"/>
    <property type="nucleotide sequence ID" value="XM_054353833.1"/>
</dbReference>
<dbReference type="PDB" id="1U35">
    <property type="method" value="X-ray"/>
    <property type="resolution" value="3.00 A"/>
    <property type="chains" value="C/G=1-120"/>
</dbReference>
<dbReference type="PDB" id="1ZR3">
    <property type="method" value="X-ray"/>
    <property type="resolution" value="1.66 A"/>
    <property type="chains" value="A/B/C/D=162-369"/>
</dbReference>
<dbReference type="PDB" id="1ZR5">
    <property type="method" value="X-ray"/>
    <property type="resolution" value="2.92 A"/>
    <property type="chains" value="A/B=161-369"/>
</dbReference>
<dbReference type="PDB" id="2F8N">
    <property type="method" value="X-ray"/>
    <property type="resolution" value="2.90 A"/>
    <property type="chains" value="G=1-369"/>
</dbReference>
<dbReference type="PDB" id="2FXK">
    <property type="method" value="X-ray"/>
    <property type="resolution" value="2.54 A"/>
    <property type="chains" value="A/B=162-369"/>
</dbReference>
<dbReference type="PDB" id="3HQH">
    <property type="method" value="X-ray"/>
    <property type="resolution" value="2.30 A"/>
    <property type="chains" value="M=167-181"/>
</dbReference>
<dbReference type="PDB" id="3HSV">
    <property type="method" value="X-ray"/>
    <property type="resolution" value="1.43 A"/>
    <property type="chains" value="M=172-186"/>
</dbReference>
<dbReference type="PDB" id="3IID">
    <property type="method" value="X-ray"/>
    <property type="resolution" value="1.90 A"/>
    <property type="chains" value="A=162-369"/>
</dbReference>
<dbReference type="PDB" id="3IIF">
    <property type="method" value="X-ray"/>
    <property type="resolution" value="2.10 A"/>
    <property type="chains" value="A/B/C=162-369"/>
</dbReference>
<dbReference type="PDB" id="3IVB">
    <property type="method" value="X-ray"/>
    <property type="resolution" value="1.75 A"/>
    <property type="chains" value="M=167-181"/>
</dbReference>
<dbReference type="PDB" id="5IIT">
    <property type="method" value="X-ray"/>
    <property type="resolution" value="2.13 A"/>
    <property type="chains" value="A/B/C/D=181-369"/>
</dbReference>
<dbReference type="PDB" id="5LNC">
    <property type="method" value="X-ray"/>
    <property type="resolution" value="3.29 A"/>
    <property type="chains" value="A/B=182-369"/>
</dbReference>
<dbReference type="PDB" id="7D3Y">
    <property type="method" value="X-ray"/>
    <property type="resolution" value="3.11 A"/>
    <property type="chains" value="A/B=181-369"/>
</dbReference>
<dbReference type="PDBsum" id="1U35"/>
<dbReference type="PDBsum" id="1ZR3"/>
<dbReference type="PDBsum" id="1ZR5"/>
<dbReference type="PDBsum" id="2F8N"/>
<dbReference type="PDBsum" id="2FXK"/>
<dbReference type="PDBsum" id="3HQH"/>
<dbReference type="PDBsum" id="3HSV"/>
<dbReference type="PDBsum" id="3IID"/>
<dbReference type="PDBsum" id="3IIF"/>
<dbReference type="PDBsum" id="3IVB"/>
<dbReference type="PDBsum" id="5IIT"/>
<dbReference type="PDBsum" id="5LNC"/>
<dbReference type="PDBsum" id="7D3Y"/>
<dbReference type="EMDB" id="EMD-18699"/>
<dbReference type="SMR" id="O75367"/>
<dbReference type="BioGRID" id="114927">
    <property type="interactions" value="512"/>
</dbReference>
<dbReference type="CORUM" id="O75367"/>
<dbReference type="DIP" id="DIP-44283N"/>
<dbReference type="ELM" id="O75367"/>
<dbReference type="FunCoup" id="O75367">
    <property type="interactions" value="2183"/>
</dbReference>
<dbReference type="IntAct" id="O75367">
    <property type="interactions" value="172"/>
</dbReference>
<dbReference type="MINT" id="O75367"/>
<dbReference type="STRING" id="9606.ENSP00000423563"/>
<dbReference type="GlyCosmos" id="O75367">
    <property type="glycosylation" value="1 site, 2 glycans"/>
</dbReference>
<dbReference type="GlyGen" id="O75367">
    <property type="glycosylation" value="1 site, 2 O-linked glycans (1 site)"/>
</dbReference>
<dbReference type="iPTMnet" id="O75367"/>
<dbReference type="PhosphoSitePlus" id="O75367"/>
<dbReference type="SwissPalm" id="O75367"/>
<dbReference type="BioMuta" id="H2AFY"/>
<dbReference type="CPTAC" id="CPTAC-383"/>
<dbReference type="CPTAC" id="CPTAC-384"/>
<dbReference type="jPOST" id="O75367"/>
<dbReference type="MassIVE" id="O75367"/>
<dbReference type="PaxDb" id="9606-ENSP00000423563"/>
<dbReference type="PeptideAtlas" id="O75367"/>
<dbReference type="PRIDE" id="O75367"/>
<dbReference type="ProteomicsDB" id="49934">
    <molecule id="O75367-1"/>
</dbReference>
<dbReference type="ProteomicsDB" id="49935">
    <molecule id="O75367-2"/>
</dbReference>
<dbReference type="ProteomicsDB" id="49936">
    <molecule id="O75367-3"/>
</dbReference>
<dbReference type="Pumba" id="O75367"/>
<dbReference type="TopDownProteomics" id="O75367-1">
    <molecule id="O75367-1"/>
</dbReference>
<dbReference type="TopDownProteomics" id="O75367-2">
    <molecule id="O75367-2"/>
</dbReference>
<dbReference type="Antibodypedia" id="26391">
    <property type="antibodies" value="222 antibodies from 31 providers"/>
</dbReference>
<dbReference type="DNASU" id="9555"/>
<dbReference type="Ensembl" id="ENST00000304332.8">
    <molecule id="O75367-3"/>
    <property type="protein sequence ID" value="ENSP00000302572.4"/>
    <property type="gene ID" value="ENSG00000113648.17"/>
</dbReference>
<dbReference type="Ensembl" id="ENST00000312469.8">
    <molecule id="O75367-2"/>
    <property type="protein sequence ID" value="ENSP00000310169.4"/>
    <property type="gene ID" value="ENSG00000113648.17"/>
</dbReference>
<dbReference type="Ensembl" id="ENST00000510038.1">
    <molecule id="O75367-1"/>
    <property type="protein sequence ID" value="ENSP00000424971.1"/>
    <property type="gene ID" value="ENSG00000113648.17"/>
</dbReference>
<dbReference type="Ensembl" id="ENST00000511689.6">
    <molecule id="O75367-1"/>
    <property type="protein sequence ID" value="ENSP00000423563.1"/>
    <property type="gene ID" value="ENSG00000113648.17"/>
</dbReference>
<dbReference type="GeneID" id="9555"/>
<dbReference type="KEGG" id="hsa:9555"/>
<dbReference type="MANE-Select" id="ENST00000511689.6">
    <molecule id="O75367-1"/>
    <property type="protein sequence ID" value="ENSP00000423563.1"/>
    <property type="RefSeq nucleotide sequence ID" value="NM_138610.3"/>
    <property type="RefSeq protein sequence ID" value="NP_613258.2"/>
</dbReference>
<dbReference type="UCSC" id="uc003lam.2">
    <molecule id="O75367-2"/>
    <property type="organism name" value="human"/>
</dbReference>
<dbReference type="AGR" id="HGNC:4740"/>
<dbReference type="CTD" id="9555"/>
<dbReference type="DisGeNET" id="9555"/>
<dbReference type="GeneCards" id="MACROH2A1"/>
<dbReference type="HGNC" id="HGNC:4740">
    <property type="gene designation" value="MACROH2A1"/>
</dbReference>
<dbReference type="HPA" id="ENSG00000113648">
    <property type="expression patterns" value="Low tissue specificity"/>
</dbReference>
<dbReference type="MalaCards" id="MACROH2A1"/>
<dbReference type="MIM" id="610054">
    <property type="type" value="gene"/>
</dbReference>
<dbReference type="neXtProt" id="NX_O75367"/>
<dbReference type="OpenTargets" id="ENSG00000113648"/>
<dbReference type="Orphanet" id="1275">
    <property type="disease" value="Brachydactyly-elbow wrist dysplasia syndrome"/>
</dbReference>
<dbReference type="VEuPathDB" id="HostDB:ENSG00000113648"/>
<dbReference type="eggNOG" id="KOG1756">
    <property type="taxonomic scope" value="Eukaryota"/>
</dbReference>
<dbReference type="eggNOG" id="KOG2633">
    <property type="taxonomic scope" value="Eukaryota"/>
</dbReference>
<dbReference type="GeneTree" id="ENSGT00940000159541"/>
<dbReference type="HOGENOM" id="CLU_062828_0_0_1"/>
<dbReference type="InParanoid" id="O75367"/>
<dbReference type="OMA" id="GHHFPAK"/>
<dbReference type="OrthoDB" id="9421954at2759"/>
<dbReference type="PAN-GO" id="O75367">
    <property type="GO annotations" value="1 GO annotation based on evolutionary models"/>
</dbReference>
<dbReference type="PhylomeDB" id="O75367"/>
<dbReference type="TreeFam" id="TF332276"/>
<dbReference type="PathwayCommons" id="O75367"/>
<dbReference type="SignaLink" id="O75367"/>
<dbReference type="SIGNOR" id="O75367"/>
<dbReference type="BioGRID-ORCS" id="9555">
    <property type="hits" value="7 hits in 1153 CRISPR screens"/>
</dbReference>
<dbReference type="CD-CODE" id="232F8A39">
    <property type="entry name" value="P-body"/>
</dbReference>
<dbReference type="CD-CODE" id="8C2F96ED">
    <property type="entry name" value="Centrosome"/>
</dbReference>
<dbReference type="CD-CODE" id="91857CE7">
    <property type="entry name" value="Nucleolus"/>
</dbReference>
<dbReference type="ChiTaRS" id="H2AFY">
    <property type="organism name" value="human"/>
</dbReference>
<dbReference type="EvolutionaryTrace" id="O75367"/>
<dbReference type="GeneWiki" id="H2AFY"/>
<dbReference type="GenomeRNAi" id="9555"/>
<dbReference type="Pharos" id="O75367">
    <property type="development level" value="Tbio"/>
</dbReference>
<dbReference type="PRO" id="PR:O75367"/>
<dbReference type="Proteomes" id="UP000005640">
    <property type="component" value="Chromosome 5"/>
</dbReference>
<dbReference type="RNAct" id="O75367">
    <property type="molecule type" value="protein"/>
</dbReference>
<dbReference type="Bgee" id="ENSG00000113648">
    <property type="expression patterns" value="Expressed in epithelium of nasopharynx and 211 other cell types or tissues"/>
</dbReference>
<dbReference type="ExpressionAtlas" id="O75367">
    <property type="expression patterns" value="baseline and differential"/>
</dbReference>
<dbReference type="GO" id="GO:0001740">
    <property type="term" value="C:Barr body"/>
    <property type="evidence" value="ECO:0000314"/>
    <property type="project" value="UniProtKB"/>
</dbReference>
<dbReference type="GO" id="GO:0000785">
    <property type="term" value="C:chromatin"/>
    <property type="evidence" value="ECO:0000314"/>
    <property type="project" value="UniProtKB"/>
</dbReference>
<dbReference type="GO" id="GO:0000781">
    <property type="term" value="C:chromosome, telomeric region"/>
    <property type="evidence" value="ECO:0007005"/>
    <property type="project" value="BHF-UCL"/>
</dbReference>
<dbReference type="GO" id="GO:0000793">
    <property type="term" value="C:condensed chromosome"/>
    <property type="evidence" value="ECO:0007669"/>
    <property type="project" value="Ensembl"/>
</dbReference>
<dbReference type="GO" id="GO:0070062">
    <property type="term" value="C:extracellular exosome"/>
    <property type="evidence" value="ECO:0007005"/>
    <property type="project" value="UniProtKB"/>
</dbReference>
<dbReference type="GO" id="GO:0000228">
    <property type="term" value="C:nuclear chromosome"/>
    <property type="evidence" value="ECO:0000314"/>
    <property type="project" value="UniProtKB"/>
</dbReference>
<dbReference type="GO" id="GO:0005730">
    <property type="term" value="C:nucleolus"/>
    <property type="evidence" value="ECO:0000314"/>
    <property type="project" value="UniProtKB"/>
</dbReference>
<dbReference type="GO" id="GO:0005654">
    <property type="term" value="C:nucleoplasm"/>
    <property type="evidence" value="ECO:0000314"/>
    <property type="project" value="HPA"/>
</dbReference>
<dbReference type="GO" id="GO:0000786">
    <property type="term" value="C:nucleosome"/>
    <property type="evidence" value="ECO:0000318"/>
    <property type="project" value="GO_Central"/>
</dbReference>
<dbReference type="GO" id="GO:0005634">
    <property type="term" value="C:nucleus"/>
    <property type="evidence" value="ECO:0007005"/>
    <property type="project" value="UniProtKB"/>
</dbReference>
<dbReference type="GO" id="GO:0005721">
    <property type="term" value="C:pericentric heterochromatin"/>
    <property type="evidence" value="ECO:0000314"/>
    <property type="project" value="BHF-UCL"/>
</dbReference>
<dbReference type="GO" id="GO:0001739">
    <property type="term" value="C:sex chromatin"/>
    <property type="evidence" value="ECO:0000304"/>
    <property type="project" value="BHF-UCL"/>
</dbReference>
<dbReference type="GO" id="GO:0090734">
    <property type="term" value="C:site of DNA damage"/>
    <property type="evidence" value="ECO:0000314"/>
    <property type="project" value="UniProt"/>
</dbReference>
<dbReference type="GO" id="GO:0072570">
    <property type="term" value="F:ADP-D-ribose binding"/>
    <property type="evidence" value="ECO:0000314"/>
    <property type="project" value="UniProtKB"/>
</dbReference>
<dbReference type="GO" id="GO:0160002">
    <property type="term" value="F:ADP-D-ribose modification-dependent protein binding"/>
    <property type="evidence" value="ECO:0000250"/>
    <property type="project" value="UniProtKB"/>
</dbReference>
<dbReference type="GO" id="GO:0031490">
    <property type="term" value="F:chromatin DNA binding"/>
    <property type="evidence" value="ECO:0000314"/>
    <property type="project" value="UniProtKB"/>
</dbReference>
<dbReference type="GO" id="GO:0003677">
    <property type="term" value="F:DNA binding"/>
    <property type="evidence" value="ECO:0000303"/>
    <property type="project" value="UniProtKB"/>
</dbReference>
<dbReference type="GO" id="GO:0010385">
    <property type="term" value="F:double-stranded methylated DNA binding"/>
    <property type="evidence" value="ECO:0000314"/>
    <property type="project" value="UniProtKB"/>
</dbReference>
<dbReference type="GO" id="GO:0019899">
    <property type="term" value="F:enzyme binding"/>
    <property type="evidence" value="ECO:0000353"/>
    <property type="project" value="BHF-UCL"/>
</dbReference>
<dbReference type="GO" id="GO:0031492">
    <property type="term" value="F:nucleosomal DNA binding"/>
    <property type="evidence" value="ECO:0000314"/>
    <property type="project" value="UniProtKB"/>
</dbReference>
<dbReference type="GO" id="GO:0160004">
    <property type="term" value="F:poly-ADP-D-ribose modification-dependent protein binding"/>
    <property type="evidence" value="ECO:0000250"/>
    <property type="project" value="UniProt"/>
</dbReference>
<dbReference type="GO" id="GO:1990841">
    <property type="term" value="F:promoter-specific chromatin binding"/>
    <property type="evidence" value="ECO:0000250"/>
    <property type="project" value="UniProtKB"/>
</dbReference>
<dbReference type="GO" id="GO:0046982">
    <property type="term" value="F:protein heterodimerization activity"/>
    <property type="evidence" value="ECO:0007669"/>
    <property type="project" value="InterPro"/>
</dbReference>
<dbReference type="GO" id="GO:0019901">
    <property type="term" value="F:protein kinase binding"/>
    <property type="evidence" value="ECO:0000353"/>
    <property type="project" value="UniProtKB"/>
</dbReference>
<dbReference type="GO" id="GO:0030291">
    <property type="term" value="F:protein serine/threonine kinase inhibitor activity"/>
    <property type="evidence" value="ECO:0000315"/>
    <property type="project" value="UniProtKB"/>
</dbReference>
<dbReference type="GO" id="GO:0000182">
    <property type="term" value="F:rDNA binding"/>
    <property type="evidence" value="ECO:0000314"/>
    <property type="project" value="UniProtKB"/>
</dbReference>
<dbReference type="GO" id="GO:0000977">
    <property type="term" value="F:RNA polymerase II transcription regulatory region sequence-specific DNA binding"/>
    <property type="evidence" value="ECO:0000314"/>
    <property type="project" value="UniProtKB"/>
</dbReference>
<dbReference type="GO" id="GO:0030527">
    <property type="term" value="F:structural constituent of chromatin"/>
    <property type="evidence" value="ECO:0000314"/>
    <property type="project" value="UniProt"/>
</dbReference>
<dbReference type="GO" id="GO:0000976">
    <property type="term" value="F:transcription cis-regulatory region binding"/>
    <property type="evidence" value="ECO:0000314"/>
    <property type="project" value="UniProtKB"/>
</dbReference>
<dbReference type="GO" id="GO:0006281">
    <property type="term" value="P:DNA repair"/>
    <property type="evidence" value="ECO:0000314"/>
    <property type="project" value="UniProt"/>
</dbReference>
<dbReference type="GO" id="GO:0040029">
    <property type="term" value="P:epigenetic regulation of gene expression"/>
    <property type="evidence" value="ECO:0000315"/>
    <property type="project" value="UniProtKB"/>
</dbReference>
<dbReference type="GO" id="GO:0071169">
    <property type="term" value="P:establishment of protein localization to chromatin"/>
    <property type="evidence" value="ECO:0000315"/>
    <property type="project" value="UniProtKB"/>
</dbReference>
<dbReference type="GO" id="GO:0031507">
    <property type="term" value="P:heterochromatin formation"/>
    <property type="evidence" value="ECO:0000318"/>
    <property type="project" value="GO_Central"/>
</dbReference>
<dbReference type="GO" id="GO:1902750">
    <property type="term" value="P:negative regulation of cell cycle G2/M phase transition"/>
    <property type="evidence" value="ECO:0000315"/>
    <property type="project" value="UniProtKB"/>
</dbReference>
<dbReference type="GO" id="GO:0045814">
    <property type="term" value="P:negative regulation of gene expression, epigenetic"/>
    <property type="evidence" value="ECO:0000315"/>
    <property type="project" value="UniProtKB"/>
</dbReference>
<dbReference type="GO" id="GO:1904815">
    <property type="term" value="P:negative regulation of protein localization to chromosome, telomeric region"/>
    <property type="evidence" value="ECO:0000314"/>
    <property type="project" value="BHF-UCL"/>
</dbReference>
<dbReference type="GO" id="GO:0071901">
    <property type="term" value="P:negative regulation of protein serine/threonine kinase activity"/>
    <property type="evidence" value="ECO:0000315"/>
    <property type="project" value="UniProtKB"/>
</dbReference>
<dbReference type="GO" id="GO:1902883">
    <property type="term" value="P:negative regulation of response to oxidative stress"/>
    <property type="evidence" value="ECO:0000315"/>
    <property type="project" value="UniProtKB"/>
</dbReference>
<dbReference type="GO" id="GO:0000122">
    <property type="term" value="P:negative regulation of transcription by RNA polymerase II"/>
    <property type="evidence" value="ECO:0000315"/>
    <property type="project" value="UniProtKB"/>
</dbReference>
<dbReference type="GO" id="GO:1901837">
    <property type="term" value="P:negative regulation of transcription of nucleolar large rRNA by RNA polymerase I"/>
    <property type="evidence" value="ECO:0000315"/>
    <property type="project" value="UniProtKB"/>
</dbReference>
<dbReference type="GO" id="GO:0006334">
    <property type="term" value="P:nucleosome assembly"/>
    <property type="evidence" value="ECO:0000303"/>
    <property type="project" value="UniProtKB"/>
</dbReference>
<dbReference type="GO" id="GO:1903226">
    <property type="term" value="P:positive regulation of endodermal cell differentiation"/>
    <property type="evidence" value="ECO:0000315"/>
    <property type="project" value="UniProtKB"/>
</dbReference>
<dbReference type="GO" id="GO:0045618">
    <property type="term" value="P:positive regulation of keratinocyte differentiation"/>
    <property type="evidence" value="ECO:0000315"/>
    <property type="project" value="UniProtKB"/>
</dbReference>
<dbReference type="GO" id="GO:0034184">
    <property type="term" value="P:positive regulation of maintenance of mitotic sister chromatid cohesion"/>
    <property type="evidence" value="ECO:0000314"/>
    <property type="project" value="BHF-UCL"/>
</dbReference>
<dbReference type="GO" id="GO:1902884">
    <property type="term" value="P:positive regulation of response to oxidative stress"/>
    <property type="evidence" value="ECO:0000315"/>
    <property type="project" value="UniProtKB"/>
</dbReference>
<dbReference type="GO" id="GO:0019216">
    <property type="term" value="P:regulation of lipid metabolic process"/>
    <property type="evidence" value="ECO:0000315"/>
    <property type="project" value="UniProtKB"/>
</dbReference>
<dbReference type="GO" id="GO:1902688">
    <property type="term" value="P:regulation of NAD metabolic process"/>
    <property type="evidence" value="ECO:0000250"/>
    <property type="project" value="UniProtKB"/>
</dbReference>
<dbReference type="GO" id="GO:0002082">
    <property type="term" value="P:regulation of oxidative phosphorylation"/>
    <property type="evidence" value="ECO:0000250"/>
    <property type="project" value="UniProt"/>
</dbReference>
<dbReference type="GO" id="GO:1902882">
    <property type="term" value="P:regulation of response to oxidative stress"/>
    <property type="evidence" value="ECO:0000315"/>
    <property type="project" value="UniProtKB"/>
</dbReference>
<dbReference type="GO" id="GO:0007549">
    <property type="term" value="P:sex-chromosome dosage compensation"/>
    <property type="evidence" value="ECO:0000314"/>
    <property type="project" value="MGI"/>
</dbReference>
<dbReference type="GO" id="GO:0045815">
    <property type="term" value="P:transcription initiation-coupled chromatin remodeling"/>
    <property type="evidence" value="ECO:0000315"/>
    <property type="project" value="UniProtKB"/>
</dbReference>
<dbReference type="CDD" id="cd00074">
    <property type="entry name" value="HFD_H2A"/>
    <property type="match status" value="1"/>
</dbReference>
<dbReference type="CDD" id="cd02904">
    <property type="entry name" value="Macro_H2A-like"/>
    <property type="match status" value="1"/>
</dbReference>
<dbReference type="FunFam" id="1.10.20.10:FF:000013">
    <property type="entry name" value="Core histone macro-H2A"/>
    <property type="match status" value="1"/>
</dbReference>
<dbReference type="FunFam" id="3.40.220.10:FF:000002">
    <property type="entry name" value="Core histone macro-H2A"/>
    <property type="match status" value="1"/>
</dbReference>
<dbReference type="Gene3D" id="1.10.20.10">
    <property type="entry name" value="Histone, subunit A"/>
    <property type="match status" value="1"/>
</dbReference>
<dbReference type="Gene3D" id="3.40.220.10">
    <property type="entry name" value="Leucine Aminopeptidase, subunit E, domain 1"/>
    <property type="match status" value="1"/>
</dbReference>
<dbReference type="InterPro" id="IPR021171">
    <property type="entry name" value="Core_histone_macro-H2A"/>
</dbReference>
<dbReference type="InterPro" id="IPR009072">
    <property type="entry name" value="Histone-fold"/>
</dbReference>
<dbReference type="InterPro" id="IPR002119">
    <property type="entry name" value="Histone_H2A"/>
</dbReference>
<dbReference type="InterPro" id="IPR007125">
    <property type="entry name" value="Histone_H2A/H2B/H3"/>
</dbReference>
<dbReference type="InterPro" id="IPR032454">
    <property type="entry name" value="Histone_H2A_C"/>
</dbReference>
<dbReference type="InterPro" id="IPR002589">
    <property type="entry name" value="Macro_dom"/>
</dbReference>
<dbReference type="InterPro" id="IPR043472">
    <property type="entry name" value="Macro_dom-like"/>
</dbReference>
<dbReference type="InterPro" id="IPR035796">
    <property type="entry name" value="Macro_H2A"/>
</dbReference>
<dbReference type="PANTHER" id="PTHR23430">
    <property type="entry name" value="HISTONE H2A"/>
    <property type="match status" value="1"/>
</dbReference>
<dbReference type="Pfam" id="PF00125">
    <property type="entry name" value="Histone"/>
    <property type="match status" value="1"/>
</dbReference>
<dbReference type="Pfam" id="PF16211">
    <property type="entry name" value="Histone_H2A_C"/>
    <property type="match status" value="1"/>
</dbReference>
<dbReference type="Pfam" id="PF01661">
    <property type="entry name" value="Macro"/>
    <property type="match status" value="1"/>
</dbReference>
<dbReference type="PIRSF" id="PIRSF037942">
    <property type="entry name" value="Core_histone_macro-H2A"/>
    <property type="match status" value="1"/>
</dbReference>
<dbReference type="PRINTS" id="PR00620">
    <property type="entry name" value="HISTONEH2A"/>
</dbReference>
<dbReference type="SMART" id="SM00506">
    <property type="entry name" value="A1pp"/>
    <property type="match status" value="1"/>
</dbReference>
<dbReference type="SMART" id="SM00414">
    <property type="entry name" value="H2A"/>
    <property type="match status" value="1"/>
</dbReference>
<dbReference type="SUPFAM" id="SSF47113">
    <property type="entry name" value="Histone-fold"/>
    <property type="match status" value="1"/>
</dbReference>
<dbReference type="SUPFAM" id="SSF52949">
    <property type="entry name" value="Macro domain-like"/>
    <property type="match status" value="1"/>
</dbReference>
<dbReference type="PROSITE" id="PS51154">
    <property type="entry name" value="MACRO"/>
    <property type="match status" value="1"/>
</dbReference>
<sequence>MSSRGGKKKSTKTSRSAKAGVIFPVGRMLRYIKKGHPKYRIGVGAPVYMAAVLEYLTAEILELAGNAARDNKKGRVTPRHILLAVANDEELNQLLKGVTIASGGVLPNIHPELLAKKRGSKGKLEAIITPPPAKKAKSPSQKKPVSKKAGGKKGARKSKKKQGEVSKAASADSTTEGTPADGFTVLSTKSLFLGQKLQVVQADIASIDSDAVVHPTNTDFYIGGEVGNTLEKKGGKEFVEAVLELRKKNGPLEVAGAAVSAGHGLPAKFVIHCNSPVWGADKCEELLEKTVKNCLALADDKKLKSIAFPSIGSGRNGFPKQTAAQLILKAISSYFVSTMSSSIKTVYFVLFDSESIGIYVQEMAKLDAN</sequence>
<name>H2AY_HUMAN</name>
<gene>
    <name evidence="29" type="primary">MACROH2A1</name>
    <name evidence="29" type="synonym">H2AFY</name>
</gene>
<reference key="1">
    <citation type="journal article" date="1998" name="Biochim. Biophys. Acta">
        <title>Isolation of cDNA clones encoding human histone macroH2A1 subtypes.</title>
        <authorList>
            <person name="Lee Y."/>
            <person name="Hong M."/>
            <person name="Kim J.W."/>
            <person name="Hong Y.M."/>
            <person name="Choe Y.-K."/>
            <person name="Chang S.Y."/>
            <person name="Lee K.S."/>
            <person name="Choe I.S."/>
        </authorList>
    </citation>
    <scope>NUCLEOTIDE SEQUENCE [MRNA] (ISOFORMS 1 AND 2)</scope>
    <scope>TISSUE SPECIFICITY</scope>
    <source>
        <tissue>Liver</tissue>
    </source>
</reference>
<reference key="2">
    <citation type="journal article" date="1998" name="Proc. Natl. Acad. Sci. U.S.A.">
        <title>Identification of genes expressed in human CD34(+) hematopoietic stem/progenitor cells by expressed sequence tags and efficient full-length cDNA cloning.</title>
        <authorList>
            <person name="Mao M."/>
            <person name="Fu G."/>
            <person name="Wu J.-S."/>
            <person name="Zhang Q.-H."/>
            <person name="Zhou J."/>
            <person name="Kan L.-X."/>
            <person name="Huang Q.-H."/>
            <person name="He K.-L."/>
            <person name="Gu B.-W."/>
            <person name="Han Z.-G."/>
            <person name="Shen Y."/>
            <person name="Gu J."/>
            <person name="Yu Y.-P."/>
            <person name="Xu S.-H."/>
            <person name="Wang Y.-X."/>
            <person name="Chen S.-J."/>
            <person name="Chen Z."/>
        </authorList>
    </citation>
    <scope>NUCLEOTIDE SEQUENCE [LARGE SCALE MRNA] (ISOFORMS 2 AND 3)</scope>
    <source>
        <tissue>Umbilical cord blood</tissue>
    </source>
</reference>
<reference key="3">
    <citation type="journal article" date="2004" name="Nat. Genet.">
        <title>Complete sequencing and characterization of 21,243 full-length human cDNAs.</title>
        <authorList>
            <person name="Ota T."/>
            <person name="Suzuki Y."/>
            <person name="Nishikawa T."/>
            <person name="Otsuki T."/>
            <person name="Sugiyama T."/>
            <person name="Irie R."/>
            <person name="Wakamatsu A."/>
            <person name="Hayashi K."/>
            <person name="Sato H."/>
            <person name="Nagai K."/>
            <person name="Kimura K."/>
            <person name="Makita H."/>
            <person name="Sekine M."/>
            <person name="Obayashi M."/>
            <person name="Nishi T."/>
            <person name="Shibahara T."/>
            <person name="Tanaka T."/>
            <person name="Ishii S."/>
            <person name="Yamamoto J."/>
            <person name="Saito K."/>
            <person name="Kawai Y."/>
            <person name="Isono Y."/>
            <person name="Nakamura Y."/>
            <person name="Nagahari K."/>
            <person name="Murakami K."/>
            <person name="Yasuda T."/>
            <person name="Iwayanagi T."/>
            <person name="Wagatsuma M."/>
            <person name="Shiratori A."/>
            <person name="Sudo H."/>
            <person name="Hosoiri T."/>
            <person name="Kaku Y."/>
            <person name="Kodaira H."/>
            <person name="Kondo H."/>
            <person name="Sugawara M."/>
            <person name="Takahashi M."/>
            <person name="Kanda K."/>
            <person name="Yokoi T."/>
            <person name="Furuya T."/>
            <person name="Kikkawa E."/>
            <person name="Omura Y."/>
            <person name="Abe K."/>
            <person name="Kamihara K."/>
            <person name="Katsuta N."/>
            <person name="Sato K."/>
            <person name="Tanikawa M."/>
            <person name="Yamazaki M."/>
            <person name="Ninomiya K."/>
            <person name="Ishibashi T."/>
            <person name="Yamashita H."/>
            <person name="Murakawa K."/>
            <person name="Fujimori K."/>
            <person name="Tanai H."/>
            <person name="Kimata M."/>
            <person name="Watanabe M."/>
            <person name="Hiraoka S."/>
            <person name="Chiba Y."/>
            <person name="Ishida S."/>
            <person name="Ono Y."/>
            <person name="Takiguchi S."/>
            <person name="Watanabe S."/>
            <person name="Yosida M."/>
            <person name="Hotuta T."/>
            <person name="Kusano J."/>
            <person name="Kanehori K."/>
            <person name="Takahashi-Fujii A."/>
            <person name="Hara H."/>
            <person name="Tanase T.-O."/>
            <person name="Nomura Y."/>
            <person name="Togiya S."/>
            <person name="Komai F."/>
            <person name="Hara R."/>
            <person name="Takeuchi K."/>
            <person name="Arita M."/>
            <person name="Imose N."/>
            <person name="Musashino K."/>
            <person name="Yuuki H."/>
            <person name="Oshima A."/>
            <person name="Sasaki N."/>
            <person name="Aotsuka S."/>
            <person name="Yoshikawa Y."/>
            <person name="Matsunawa H."/>
            <person name="Ichihara T."/>
            <person name="Shiohata N."/>
            <person name="Sano S."/>
            <person name="Moriya S."/>
            <person name="Momiyama H."/>
            <person name="Satoh N."/>
            <person name="Takami S."/>
            <person name="Terashima Y."/>
            <person name="Suzuki O."/>
            <person name="Nakagawa S."/>
            <person name="Senoh A."/>
            <person name="Mizoguchi H."/>
            <person name="Goto Y."/>
            <person name="Shimizu F."/>
            <person name="Wakebe H."/>
            <person name="Hishigaki H."/>
            <person name="Watanabe T."/>
            <person name="Sugiyama A."/>
            <person name="Takemoto M."/>
            <person name="Kawakami B."/>
            <person name="Yamazaki M."/>
            <person name="Watanabe K."/>
            <person name="Kumagai A."/>
            <person name="Itakura S."/>
            <person name="Fukuzumi Y."/>
            <person name="Fujimori Y."/>
            <person name="Komiyama M."/>
            <person name="Tashiro H."/>
            <person name="Tanigami A."/>
            <person name="Fujiwara T."/>
            <person name="Ono T."/>
            <person name="Yamada K."/>
            <person name="Fujii Y."/>
            <person name="Ozaki K."/>
            <person name="Hirao M."/>
            <person name="Ohmori Y."/>
            <person name="Kawabata A."/>
            <person name="Hikiji T."/>
            <person name="Kobatake N."/>
            <person name="Inagaki H."/>
            <person name="Ikema Y."/>
            <person name="Okamoto S."/>
            <person name="Okitani R."/>
            <person name="Kawakami T."/>
            <person name="Noguchi S."/>
            <person name="Itoh T."/>
            <person name="Shigeta K."/>
            <person name="Senba T."/>
            <person name="Matsumura K."/>
            <person name="Nakajima Y."/>
            <person name="Mizuno T."/>
            <person name="Morinaga M."/>
            <person name="Sasaki M."/>
            <person name="Togashi T."/>
            <person name="Oyama M."/>
            <person name="Hata H."/>
            <person name="Watanabe M."/>
            <person name="Komatsu T."/>
            <person name="Mizushima-Sugano J."/>
            <person name="Satoh T."/>
            <person name="Shirai Y."/>
            <person name="Takahashi Y."/>
            <person name="Nakagawa K."/>
            <person name="Okumura K."/>
            <person name="Nagase T."/>
            <person name="Nomura N."/>
            <person name="Kikuchi H."/>
            <person name="Masuho Y."/>
            <person name="Yamashita R."/>
            <person name="Nakai K."/>
            <person name="Yada T."/>
            <person name="Nakamura Y."/>
            <person name="Ohara O."/>
            <person name="Isogai T."/>
            <person name="Sugano S."/>
        </authorList>
    </citation>
    <scope>NUCLEOTIDE SEQUENCE [LARGE SCALE MRNA] (ISOFORM 2)</scope>
    <source>
        <tissue>Ovary</tissue>
    </source>
</reference>
<reference key="4">
    <citation type="journal article" date="2004" name="Nature">
        <title>The DNA sequence and comparative analysis of human chromosome 5.</title>
        <authorList>
            <person name="Schmutz J."/>
            <person name="Martin J."/>
            <person name="Terry A."/>
            <person name="Couronne O."/>
            <person name="Grimwood J."/>
            <person name="Lowry S."/>
            <person name="Gordon L.A."/>
            <person name="Scott D."/>
            <person name="Xie G."/>
            <person name="Huang W."/>
            <person name="Hellsten U."/>
            <person name="Tran-Gyamfi M."/>
            <person name="She X."/>
            <person name="Prabhakar S."/>
            <person name="Aerts A."/>
            <person name="Altherr M."/>
            <person name="Bajorek E."/>
            <person name="Black S."/>
            <person name="Branscomb E."/>
            <person name="Caoile C."/>
            <person name="Challacombe J.F."/>
            <person name="Chan Y.M."/>
            <person name="Denys M."/>
            <person name="Detter J.C."/>
            <person name="Escobar J."/>
            <person name="Flowers D."/>
            <person name="Fotopulos D."/>
            <person name="Glavina T."/>
            <person name="Gomez M."/>
            <person name="Gonzales E."/>
            <person name="Goodstein D."/>
            <person name="Grigoriev I."/>
            <person name="Groza M."/>
            <person name="Hammon N."/>
            <person name="Hawkins T."/>
            <person name="Haydu L."/>
            <person name="Israni S."/>
            <person name="Jett J."/>
            <person name="Kadner K."/>
            <person name="Kimball H."/>
            <person name="Kobayashi A."/>
            <person name="Lopez F."/>
            <person name="Lou Y."/>
            <person name="Martinez D."/>
            <person name="Medina C."/>
            <person name="Morgan J."/>
            <person name="Nandkeshwar R."/>
            <person name="Noonan J.P."/>
            <person name="Pitluck S."/>
            <person name="Pollard M."/>
            <person name="Predki P."/>
            <person name="Priest J."/>
            <person name="Ramirez L."/>
            <person name="Retterer J."/>
            <person name="Rodriguez A."/>
            <person name="Rogers S."/>
            <person name="Salamov A."/>
            <person name="Salazar A."/>
            <person name="Thayer N."/>
            <person name="Tice H."/>
            <person name="Tsai M."/>
            <person name="Ustaszewska A."/>
            <person name="Vo N."/>
            <person name="Wheeler J."/>
            <person name="Wu K."/>
            <person name="Yang J."/>
            <person name="Dickson M."/>
            <person name="Cheng J.-F."/>
            <person name="Eichler E.E."/>
            <person name="Olsen A."/>
            <person name="Pennacchio L.A."/>
            <person name="Rokhsar D.S."/>
            <person name="Richardson P."/>
            <person name="Lucas S.M."/>
            <person name="Myers R.M."/>
            <person name="Rubin E.M."/>
        </authorList>
    </citation>
    <scope>NUCLEOTIDE SEQUENCE [LARGE SCALE GENOMIC DNA]</scope>
</reference>
<reference key="5">
    <citation type="journal article" date="2004" name="Genome Res.">
        <title>The status, quality, and expansion of the NIH full-length cDNA project: the Mammalian Gene Collection (MGC).</title>
        <authorList>
            <consortium name="The MGC Project Team"/>
        </authorList>
    </citation>
    <scope>NUCLEOTIDE SEQUENCE [LARGE SCALE MRNA] (ISOFORM 2)</scope>
    <source>
        <tissue>Bone marrow</tissue>
        <tissue>Placenta</tissue>
    </source>
</reference>
<reference key="6">
    <citation type="journal article" date="2003" name="Int. J. Cancer">
        <title>Novel tumor antigens identified by autologous antibody screening of childhood medulloblastoma cDNA libraries.</title>
        <authorList>
            <person name="Behrends U."/>
            <person name="Schneider I."/>
            <person name="Roessler S."/>
            <person name="Frauenknecht H."/>
            <person name="Golbeck A."/>
            <person name="Lechner B."/>
            <person name="Eigenstetter G."/>
            <person name="Zobywalski C."/>
            <person name="Mueller-Weihrich S."/>
            <person name="Graubner U."/>
            <person name="Schmid I."/>
            <person name="Sackerer D."/>
            <person name="Spaeth M."/>
            <person name="Goetz C."/>
            <person name="Prantl F."/>
            <person name="Asmuss H.-P."/>
            <person name="Bise K."/>
            <person name="Mautner J."/>
        </authorList>
    </citation>
    <scope>NUCLEOTIDE SEQUENCE [MRNA] OF 6-369 (ISOFORM 3)</scope>
    <source>
        <tissue>Medulloblastoma</tissue>
    </source>
</reference>
<reference key="7">
    <citation type="journal article" date="1998" name="Nature">
        <title>Histone macroH2A1 is concentrated in the inactive X chromosome of female mammals.</title>
        <authorList>
            <person name="Costanzi C."/>
            <person name="Pehrson J.R."/>
        </authorList>
    </citation>
    <scope>SUBCELLULAR LOCATION</scope>
</reference>
<reference key="8">
    <citation type="journal article" date="2003" name="Mol. Cell">
        <title>The histone variant macroH2A interferes with transcription factor binding and SWI/SNF nucleosome remodeling.</title>
        <authorList>
            <person name="Angelov D."/>
            <person name="Molla A."/>
            <person name="Perche P.-Y."/>
            <person name="Hans F."/>
            <person name="Cote J."/>
            <person name="Khochbin S."/>
            <person name="Bouvet P."/>
            <person name="Dimitrov S."/>
        </authorList>
    </citation>
    <scope>FUNCTION</scope>
</reference>
<reference key="9">
    <citation type="journal article" date="2005" name="Biochem. Biophys. Res. Commun.">
        <title>Histone variant macroH2A1.2 is mono-ubiquitinated at its histone domain.</title>
        <authorList>
            <person name="Ogawa Y."/>
            <person name="Ono T."/>
            <person name="Wakata Y."/>
            <person name="Okawa K."/>
            <person name="Tagami H."/>
            <person name="Shibahara K."/>
        </authorList>
    </citation>
    <scope>UBIQUITINATION AT LYS-116 AND LYS-117</scope>
    <scope>IDENTIFICATION BY MASS SPECTROMETRY</scope>
</reference>
<reference key="10">
    <citation type="journal article" date="2005" name="Dev. Cell">
        <title>Formation of MacroH2A-containing senescence-associated heterochromatin foci and senescence driven by ASF1a and HIRA.</title>
        <authorList>
            <person name="Zhang R."/>
            <person name="Poustovoitov M.V."/>
            <person name="Ye X."/>
            <person name="Santos H.A."/>
            <person name="Chen W."/>
            <person name="Daganzo S.M."/>
            <person name="Erzberger J.P."/>
            <person name="Serebriiskii I.G."/>
            <person name="Canutescu A.A."/>
            <person name="Dunbrack R.L."/>
            <person name="Pehrson J.R."/>
            <person name="Berger J.M."/>
            <person name="Kaufman P.D."/>
            <person name="Adams P.D."/>
        </authorList>
    </citation>
    <scope>FUNCTION</scope>
    <scope>SUBCELLULAR LOCATION</scope>
</reference>
<reference key="11">
    <citation type="journal article" date="2005" name="EMBO J.">
        <title>The macro domain is an ADP-ribose binding module.</title>
        <authorList>
            <person name="Karras G.I."/>
            <person name="Kustatscher G."/>
            <person name="Buhecha H.R."/>
            <person name="Allen M.D."/>
            <person name="Pugieux C."/>
            <person name="Sait F."/>
            <person name="Bycroft M."/>
            <person name="Ladurner A.G."/>
        </authorList>
    </citation>
    <scope>FUNCTION</scope>
    <scope>BINDING OF THE MACRO DOMAIN TO ADP-RIBOSE (ISOFORM 1)</scope>
</reference>
<reference key="12">
    <citation type="journal article" date="2005" name="Proc. Natl. Acad. Sci. U.S.A.">
        <title>Stable X chromosome inactivation involves the PRC1 Polycomb complex and requires histone MACROH2A1 and the CULLIN3/SPOP ubiquitin E3 ligase.</title>
        <authorList>
            <person name="Hernandez-Munoz I."/>
            <person name="Lund A.H."/>
            <person name="van der Stoop P."/>
            <person name="Boutsma E."/>
            <person name="Muijrers I."/>
            <person name="Verhoeven E."/>
            <person name="Nusinow D.A."/>
            <person name="Panning B."/>
            <person name="Marahrens Y."/>
            <person name="van Lohuizen M."/>
        </authorList>
    </citation>
    <scope>IDENTIFICATION IN A COMPLEX WITH CULLIN3 AND SPOP</scope>
    <scope>UBIQUITINATION</scope>
    <scope>SUBCELLULAR LOCATION</scope>
    <scope>FUNCTION</scope>
</reference>
<reference key="13">
    <citation type="journal article" date="2006" name="Cell">
        <title>Global, in vivo, and site-specific phosphorylation dynamics in signaling networks.</title>
        <authorList>
            <person name="Olsen J.V."/>
            <person name="Blagoev B."/>
            <person name="Gnad F."/>
            <person name="Macek B."/>
            <person name="Kumar C."/>
            <person name="Mortensen P."/>
            <person name="Mann M."/>
        </authorList>
    </citation>
    <scope>PHOSPHORYLATION [LARGE SCALE ANALYSIS] AT THR-129 AND THR-178</scope>
    <scope>IDENTIFICATION BY MASS SPECTROMETRY [LARGE SCALE ANALYSIS]</scope>
    <source>
        <tissue>Cervix carcinoma</tissue>
    </source>
</reference>
<reference key="14">
    <citation type="journal article" date="2006" name="Mol. Cell. Biol.">
        <title>Mechanism of polymerase II transcription repression by the histone variant macroH2A.</title>
        <authorList>
            <person name="Doyen C.-M."/>
            <person name="An W."/>
            <person name="Angelov D."/>
            <person name="Bondarenko V."/>
            <person name="Mietton F."/>
            <person name="Studitsky V.M."/>
            <person name="Hamiche A."/>
            <person name="Roeder R.G."/>
            <person name="Bouvet P."/>
            <person name="Dimitrov S."/>
        </authorList>
    </citation>
    <scope>FUNCTION</scope>
</reference>
<reference key="15">
    <citation type="journal article" date="2006" name="Mol. Cell. Proteomics">
        <title>Mapping post-translational modifications of the histone variant MacroH2A1 using tandem mass spectrometry.</title>
        <authorList>
            <person name="Chu F."/>
            <person name="Nusinow D.A."/>
            <person name="Chalkley R.J."/>
            <person name="Plath K."/>
            <person name="Panning B."/>
            <person name="Burlingame A.L."/>
        </authorList>
    </citation>
    <scope>METHYLATION AT LYS-18 AND LYS-123</scope>
    <scope>PHOSPHORYLATION AT THR-129</scope>
    <scope>IDENTIFICATION BY MASS SPECTROMETRY</scope>
</reference>
<reference key="16">
    <citation type="journal article" date="2007" name="J. Proteome Res.">
        <title>Improved titanium dioxide enrichment of phosphopeptides from HeLa cells and high confident phosphopeptide identification by cross-validation of MS/MS and MS/MS/MS spectra.</title>
        <authorList>
            <person name="Yu L.R."/>
            <person name="Zhu Z."/>
            <person name="Chan K.C."/>
            <person name="Issaq H.J."/>
            <person name="Dimitrov D.S."/>
            <person name="Veenstra T.D."/>
        </authorList>
    </citation>
    <scope>PHOSPHORYLATION [LARGE SCALE ANALYSIS] AT THR-129</scope>
    <scope>IDENTIFICATION BY MASS SPECTROMETRY [LARGE SCALE ANALYSIS]</scope>
    <source>
        <tissue>Cervix carcinoma</tissue>
    </source>
</reference>
<reference key="17">
    <citation type="journal article" date="2008" name="Proc. Natl. Acad. Sci. U.S.A.">
        <title>A quantitative atlas of mitotic phosphorylation.</title>
        <authorList>
            <person name="Dephoure N."/>
            <person name="Zhou C."/>
            <person name="Villen J."/>
            <person name="Beausoleil S.A."/>
            <person name="Bakalarski C.E."/>
            <person name="Elledge S.J."/>
            <person name="Gygi S.P."/>
        </authorList>
    </citation>
    <scope>PHOSPHORYLATION [LARGE SCALE ANALYSIS] AT SER-170 AND THR-178</scope>
    <scope>IDENTIFICATION BY MASS SPECTROMETRY [LARGE SCALE ANALYSIS]</scope>
    <source>
        <tissue>Cervix carcinoma</tissue>
    </source>
</reference>
<reference key="18">
    <citation type="journal article" date="2009" name="Anal. Chem.">
        <title>Lys-N and trypsin cover complementary parts of the phosphoproteome in a refined SCX-based approach.</title>
        <authorList>
            <person name="Gauci S."/>
            <person name="Helbig A.O."/>
            <person name="Slijper M."/>
            <person name="Krijgsveld J."/>
            <person name="Heck A.J."/>
            <person name="Mohammed S."/>
        </authorList>
    </citation>
    <scope>IDENTIFICATION BY MASS SPECTROMETRY [LARGE SCALE ANALYSIS]</scope>
</reference>
<reference key="19">
    <citation type="journal article" date="2009" name="Sci. Signal.">
        <title>Quantitative phosphoproteomic analysis of T cell receptor signaling reveals system-wide modulation of protein-protein interactions.</title>
        <authorList>
            <person name="Mayya V."/>
            <person name="Lundgren D.H."/>
            <person name="Hwang S.-I."/>
            <person name="Rezaul K."/>
            <person name="Wu L."/>
            <person name="Eng J.K."/>
            <person name="Rodionov V."/>
            <person name="Han D.K."/>
        </authorList>
    </citation>
    <scope>PHOSPHORYLATION [LARGE SCALE ANALYSIS] AT THR-129; SER-170; SER-173 AND THR-178</scope>
    <scope>IDENTIFICATION BY MASS SPECTROMETRY [LARGE SCALE ANALYSIS]</scope>
    <source>
        <tissue>Leukemic T-cell</tissue>
    </source>
</reference>
<reference key="20">
    <citation type="journal article" date="2010" name="Sci. Signal.">
        <title>Quantitative phosphoproteomics reveals widespread full phosphorylation site occupancy during mitosis.</title>
        <authorList>
            <person name="Olsen J.V."/>
            <person name="Vermeulen M."/>
            <person name="Santamaria A."/>
            <person name="Kumar C."/>
            <person name="Miller M.L."/>
            <person name="Jensen L.J."/>
            <person name="Gnad F."/>
            <person name="Cox J."/>
            <person name="Jensen T.S."/>
            <person name="Nigg E.A."/>
            <person name="Brunak S."/>
            <person name="Mann M."/>
        </authorList>
    </citation>
    <scope>PHOSPHORYLATION [LARGE SCALE ANALYSIS] AT THR-129 AND THR-178</scope>
    <scope>IDENTIFICATION BY MASS SPECTROMETRY [LARGE SCALE ANALYSIS]</scope>
    <source>
        <tissue>Cervix carcinoma</tissue>
    </source>
</reference>
<reference key="21">
    <citation type="journal article" date="2011" name="Mol. Cell">
        <title>DNA repair factor APLF is a histone chaperone.</title>
        <authorList>
            <person name="Mehrotra P.V."/>
            <person name="Ahel D."/>
            <person name="Ryan D.P."/>
            <person name="Weston R."/>
            <person name="Wiechens N."/>
            <person name="Kraehenbuehl R."/>
            <person name="Owen-Hughes T."/>
            <person name="Ahel I."/>
        </authorList>
    </citation>
    <scope>SUBCELLULAR LOCATION</scope>
</reference>
<reference key="22">
    <citation type="journal article" date="2011" name="Sci. Signal.">
        <title>System-wide temporal characterization of the proteome and phosphoproteome of human embryonic stem cell differentiation.</title>
        <authorList>
            <person name="Rigbolt K.T."/>
            <person name="Prokhorova T.A."/>
            <person name="Akimov V."/>
            <person name="Henningsen J."/>
            <person name="Johansen P.T."/>
            <person name="Kratchmarova I."/>
            <person name="Kassem M."/>
            <person name="Mann M."/>
            <person name="Olsen J.V."/>
            <person name="Blagoev B."/>
        </authorList>
    </citation>
    <scope>PHOSPHORYLATION [LARGE SCALE ANALYSIS] AT THR-129 AND SER-170</scope>
    <scope>IDENTIFICATION BY MASS SPECTROMETRY [LARGE SCALE ANALYSIS]</scope>
</reference>
<reference key="23">
    <citation type="journal article" date="2012" name="Nat. Struct. Mol. Biol.">
        <title>Splicing switch of an epigenetic regulator by RNA helicases promotes tumor-cell invasiveness.</title>
        <authorList>
            <person name="Dardenne E."/>
            <person name="Pierredon S."/>
            <person name="Driouch K."/>
            <person name="Gratadou L."/>
            <person name="Lacroix-Triki M."/>
            <person name="Espinoza M.P."/>
            <person name="Zonta E."/>
            <person name="Germann S."/>
            <person name="Mortada H."/>
            <person name="Villemin J.P."/>
            <person name="Dutertre M."/>
            <person name="Lidereau R."/>
            <person name="Vagner S."/>
            <person name="Auboeuf D."/>
        </authorList>
    </citation>
    <scope>FUNCTION (ISOFORMS 1 AND 2)</scope>
    <scope>ALTERNATIVE SPLICING (ISOFORMS 1 AND 2)</scope>
</reference>
<reference key="24">
    <citation type="journal article" date="2013" name="J. Proteome Res.">
        <title>Toward a comprehensive characterization of a human cancer cell phosphoproteome.</title>
        <authorList>
            <person name="Zhou H."/>
            <person name="Di Palma S."/>
            <person name="Preisinger C."/>
            <person name="Peng M."/>
            <person name="Polat A.N."/>
            <person name="Heck A.J."/>
            <person name="Mohammed S."/>
        </authorList>
    </citation>
    <scope>PHOSPHORYLATION [LARGE SCALE ANALYSIS] AT THR-129; SER-170; SER-173 AND THR-178</scope>
    <scope>IDENTIFICATION BY MASS SPECTROMETRY [LARGE SCALE ANALYSIS]</scope>
    <source>
        <tissue>Cervix carcinoma</tissue>
        <tissue>Erythroleukemia</tissue>
    </source>
</reference>
<reference key="25">
    <citation type="journal article" date="2013" name="Nat. Struct. Mol. Biol.">
        <title>Macrodomain-containing proteins are new mono-ADP-ribosylhydrolases.</title>
        <authorList>
            <person name="Rosenthal F."/>
            <person name="Feijs K.L."/>
            <person name="Frugier E."/>
            <person name="Bonalli M."/>
            <person name="Forst A.H."/>
            <person name="Imhof R."/>
            <person name="Winkler H.C."/>
            <person name="Fischer D."/>
            <person name="Caflisch A."/>
            <person name="Hassa P.O."/>
            <person name="Luescher B."/>
            <person name="Hottiger M.O."/>
        </authorList>
    </citation>
    <scope>LACK OF ADP-RIBOSE GLYCOHYDROLASE ACTIVITY</scope>
</reference>
<reference key="26">
    <citation type="journal article" date="2018" name="Nucleic Acids Res.">
        <title>DNA repair factor APLF acts as a H2A-H2B histone chaperone through binding its DNA interaction surface.</title>
        <authorList>
            <person name="Corbeski I."/>
            <person name="Dolinar K."/>
            <person name="Wienk H."/>
            <person name="Boelens R."/>
            <person name="van Ingen H."/>
        </authorList>
    </citation>
    <scope>SUBCELLULAR LOCATION</scope>
</reference>
<reference key="27">
    <citation type="journal article" date="2017" name="Nat. Struct. Mol. Biol.">
        <title>Site-specific mapping of the human SUMO proteome reveals co-modification with phosphorylation.</title>
        <authorList>
            <person name="Hendriks I.A."/>
            <person name="Lyon D."/>
            <person name="Young C."/>
            <person name="Jensen L.J."/>
            <person name="Vertegaal A.C."/>
            <person name="Nielsen M.L."/>
        </authorList>
    </citation>
    <scope>SUMOYLATION [LARGE SCALE ANALYSIS] AT LYS-123; LYS-167; LYS-189 AND LYS-320</scope>
    <scope>IDENTIFICATION BY MASS SPECTROMETRY [LARGE SCALE ANALYSIS]</scope>
</reference>
<reference key="28">
    <citation type="journal article" date="2005" name="Mol. Cell. Biol.">
        <title>Structural characterization of the histone variant macroH2A.</title>
        <authorList>
            <person name="Chakravarthy S."/>
            <person name="Gundimella S.K."/>
            <person name="Caron C."/>
            <person name="Perche P.-Y."/>
            <person name="Pehrson J.R."/>
            <person name="Khochbin S."/>
            <person name="Luger K."/>
        </authorList>
    </citation>
    <scope>X-RAY CRYSTALLOGRAPHY (3.0 ANGSTROMS) OF 1-120 IN COMPLEX WITH THE NUCLEOSOME CORE PARTICLE</scope>
    <scope>FUNCTION</scope>
</reference>
<reference key="29">
    <citation type="journal article" date="2005" name="Nat. Struct. Mol. Biol.">
        <title>Splicing regulates NAD metabolite binding to histone macroH2A.</title>
        <authorList>
            <person name="Kustatscher G."/>
            <person name="Hothorn M."/>
            <person name="Pugieux C."/>
            <person name="Scheffzek K."/>
            <person name="Ladurner A.G."/>
        </authorList>
    </citation>
    <scope>X-RAY CRYSTALLOGRAPHY (2.54 ANGSTROMS) OF 162-372 (ISOFORM 1)</scope>
    <scope>X-RAY CRYSTALLOGRAPHY (2.92 ANGSTROMS) OF 161-372 (ISOFORM 2)</scope>
    <scope>BINDING TO ADP-RIBOSE AND O-ACETYL-ADP-RIBOSE (ISOFORM 1)</scope>
</reference>
<reference key="30">
    <citation type="journal article" date="2009" name="Mol. Cell">
        <title>Structures of SPOP-substrate complexes: insights into molecular architectures of BTB-Cul3 ubiquitin ligases.</title>
        <authorList>
            <person name="Zhuang M."/>
            <person name="Calabrese M.F."/>
            <person name="Liu J."/>
            <person name="Waddell M.B."/>
            <person name="Nourse A."/>
            <person name="Hammel M."/>
            <person name="Miller D.J."/>
            <person name="Walden H."/>
            <person name="Duda D.M."/>
            <person name="Seyedin S.N."/>
            <person name="Hoggard T."/>
            <person name="Harper J.W."/>
            <person name="White K.P."/>
            <person name="Schulman B.A."/>
        </authorList>
    </citation>
    <scope>X-RAY CRYSTALLOGRAPHY (1.43 ANGSTROMS) OF 172-186 IN COMPLEXES WITH SPOP</scope>
    <scope>SUBUNIT</scope>
    <scope>UBIQUITINATION</scope>
</reference>
<feature type="chain" id="PRO_0000055318" description="Core histone macro-H2A.1">
    <location>
        <begin position="1"/>
        <end position="369"/>
    </location>
</feature>
<feature type="domain" description="Histone H2A">
    <location>
        <begin position="2"/>
        <end position="117"/>
    </location>
</feature>
<feature type="domain" description="Macro" evidence="4">
    <location>
        <begin position="184"/>
        <end position="367"/>
    </location>
</feature>
<feature type="region of interest" description="Disordered" evidence="5">
    <location>
        <begin position="128"/>
        <end position="180"/>
    </location>
</feature>
<feature type="compositionally biased region" description="Basic residues" evidence="5">
    <location>
        <begin position="144"/>
        <end position="160"/>
    </location>
</feature>
<feature type="binding site" evidence="1">
    <location>
        <position position="203"/>
    </location>
    <ligand>
        <name>a glycoprotein</name>
        <dbReference type="ChEBI" id="CHEBI:17089"/>
    </ligand>
    <ligandPart>
        <name>poly[(1''-&gt;2')-ADP-alpha-D-ribose] group</name>
        <dbReference type="ChEBI" id="CHEBI:157741"/>
    </ligandPart>
</feature>
<feature type="binding site" evidence="1">
    <location>
        <position position="204"/>
    </location>
    <ligand>
        <name>a glycoprotein</name>
        <dbReference type="ChEBI" id="CHEBI:17089"/>
    </ligand>
    <ligandPart>
        <name>poly[(1''-&gt;2')-ADP-alpha-D-ribose] group</name>
        <dbReference type="ChEBI" id="CHEBI:157741"/>
    </ligandPart>
</feature>
<feature type="binding site" evidence="1">
    <location>
        <position position="226"/>
    </location>
    <ligand>
        <name>a glycoprotein</name>
        <dbReference type="ChEBI" id="CHEBI:17089"/>
    </ligand>
    <ligandPart>
        <name>poly[(1''-&gt;2')-ADP-alpha-D-ribose] group</name>
        <dbReference type="ChEBI" id="CHEBI:157741"/>
    </ligandPart>
</feature>
<feature type="binding site" evidence="1">
    <location>
        <position position="275"/>
    </location>
    <ligand>
        <name>a glycoprotein</name>
        <dbReference type="ChEBI" id="CHEBI:17089"/>
    </ligand>
    <ligandPart>
        <name>poly[(1''-&gt;2')-ADP-alpha-D-ribose] group</name>
        <dbReference type="ChEBI" id="CHEBI:157741"/>
    </ligandPart>
</feature>
<feature type="binding site" evidence="1">
    <location>
        <position position="312"/>
    </location>
    <ligand>
        <name>a glycoprotein</name>
        <dbReference type="ChEBI" id="CHEBI:17089"/>
    </ligand>
    <ligandPart>
        <name>poly[(1''-&gt;2')-ADP-alpha-D-ribose] group</name>
        <dbReference type="ChEBI" id="CHEBI:157741"/>
    </ligandPart>
</feature>
<feature type="binding site" evidence="1">
    <location>
        <position position="313"/>
    </location>
    <ligand>
        <name>a glycoprotein</name>
        <dbReference type="ChEBI" id="CHEBI:17089"/>
    </ligand>
    <ligandPart>
        <name>poly[(1''-&gt;2')-ADP-alpha-D-ribose] group</name>
        <dbReference type="ChEBI" id="CHEBI:157741"/>
    </ligandPart>
</feature>
<feature type="binding site" evidence="1">
    <location>
        <position position="314"/>
    </location>
    <ligand>
        <name>a glycoprotein</name>
        <dbReference type="ChEBI" id="CHEBI:17089"/>
    </ligand>
    <ligandPart>
        <name>poly[(1''-&gt;2')-ADP-alpha-D-ribose] group</name>
        <dbReference type="ChEBI" id="CHEBI:157741"/>
    </ligandPart>
</feature>
<feature type="binding site" evidence="1">
    <location>
        <position position="316"/>
    </location>
    <ligand>
        <name>a glycoprotein</name>
        <dbReference type="ChEBI" id="CHEBI:17089"/>
    </ligand>
    <ligandPart>
        <name>poly[(1''-&gt;2')-ADP-alpha-D-ribose] group</name>
        <dbReference type="ChEBI" id="CHEBI:157741"/>
    </ligandPart>
</feature>
<feature type="modified residue" description="N6-lactoyllysine; alternate" evidence="2">
    <location>
        <position position="7"/>
    </location>
</feature>
<feature type="modified residue" description="N6-lactoyllysine; alternate" evidence="2">
    <location>
        <position position="9"/>
    </location>
</feature>
<feature type="modified residue" description="N6-methyllysine" evidence="12">
    <location>
        <position position="18"/>
    </location>
</feature>
<feature type="modified residue" description="N6-acetyllysine; alternate" evidence="3">
    <location>
        <position position="116"/>
    </location>
</feature>
<feature type="modified residue" description="N6,N6-dimethyllysine; alternate" evidence="28">
    <location>
        <position position="123"/>
    </location>
</feature>
<feature type="modified residue" description="N6-acetyllysine; alternate" evidence="3">
    <location>
        <position position="123"/>
    </location>
</feature>
<feature type="modified residue" description="Phosphothreonine" evidence="12 30 31 33 34 35 36">
    <location>
        <position position="129"/>
    </location>
</feature>
<feature type="modified residue" description="Phosphoserine" evidence="32 33 35 36">
    <location>
        <position position="170"/>
    </location>
</feature>
<feature type="modified residue" description="Phosphoserine" evidence="33 36">
    <location>
        <position position="173"/>
    </location>
</feature>
<feature type="modified residue" description="Phosphothreonine" evidence="30 32 33 34 36">
    <location>
        <position position="178"/>
    </location>
</feature>
<feature type="cross-link" description="Glycyl lysine isopeptide (Lys-Gly) (interchain with G-Cter in ubiquitin); alternate" evidence="11">
    <location>
        <position position="116"/>
    </location>
</feature>
<feature type="cross-link" description="Glycyl lysine isopeptide (Lys-Gly) (interchain with G-Cter in ubiquitin)" evidence="11">
    <location>
        <position position="117"/>
    </location>
</feature>
<feature type="cross-link" description="Glycyl lysine isopeptide (Lys-Gly) (interchain with G-Cter in SUMO2); alternate" evidence="37">
    <location>
        <position position="123"/>
    </location>
</feature>
<feature type="cross-link" description="Glycyl lysine isopeptide (Lys-Gly) (interchain with G-Cter in SUMO2)" evidence="37">
    <location>
        <position position="167"/>
    </location>
</feature>
<feature type="cross-link" description="Glycyl lysine isopeptide (Lys-Gly) (interchain with G-Cter in SUMO2)" evidence="37">
    <location>
        <position position="189"/>
    </location>
</feature>
<feature type="cross-link" description="Glycyl lysine isopeptide (Lys-Gly) (interchain with G-Cter in SUMO2)" evidence="37">
    <location>
        <position position="320"/>
    </location>
</feature>
<feature type="splice variant" id="VSP_061609" description="In isoform 3." evidence="21 25">
    <location>
        <position position="160"/>
    </location>
</feature>
<feature type="splice variant" id="VSP_061610" description="In isoform 2 and isoform 3." evidence="21 22 23 25 26">
    <original>QVVQADIASIDSDAVVHPTNTDFYIGGEV</original>
    <variation>NLIHSEISNLAGFEVEAIINPTNADIDLKDDL</variation>
    <location>
        <begin position="198"/>
        <end position="226"/>
    </location>
</feature>
<feature type="sequence conflict" description="In Ref. 3; BAB14565." evidence="27" ref="3">
    <original>L</original>
    <variation>F</variation>
    <location>
        <position position="186"/>
    </location>
</feature>
<feature type="sequence conflict" description="In Ref. 5; AAH95406." evidence="27" ref="5">
    <original>E</original>
    <variation>G</variation>
    <location>
        <position position="288"/>
    </location>
</feature>
<feature type="helix" evidence="41">
    <location>
        <begin position="15"/>
        <end position="19"/>
    </location>
</feature>
<feature type="helix" evidence="41">
    <location>
        <begin position="25"/>
        <end position="35"/>
    </location>
</feature>
<feature type="strand" evidence="41">
    <location>
        <begin position="36"/>
        <end position="38"/>
    </location>
</feature>
<feature type="strand" evidence="38">
    <location>
        <begin position="39"/>
        <end position="41"/>
    </location>
</feature>
<feature type="helix" evidence="41">
    <location>
        <begin position="44"/>
        <end position="70"/>
    </location>
</feature>
<feature type="strand" evidence="41">
    <location>
        <begin position="74"/>
        <end position="76"/>
    </location>
</feature>
<feature type="helix" evidence="41">
    <location>
        <begin position="78"/>
        <end position="86"/>
    </location>
</feature>
<feature type="helix" evidence="41">
    <location>
        <begin position="89"/>
        <end position="94"/>
    </location>
</feature>
<feature type="turn" evidence="41">
    <location>
        <begin position="95"/>
        <end position="97"/>
    </location>
</feature>
<feature type="strand" evidence="41">
    <location>
        <begin position="98"/>
        <end position="100"/>
    </location>
</feature>
<feature type="helix" evidence="41">
    <location>
        <begin position="111"/>
        <end position="113"/>
    </location>
</feature>
<feature type="strand" evidence="43">
    <location>
        <begin position="174"/>
        <end position="177"/>
    </location>
</feature>
<feature type="strand" evidence="39">
    <location>
        <begin position="185"/>
        <end position="190"/>
    </location>
</feature>
<feature type="strand" evidence="39">
    <location>
        <begin position="196"/>
        <end position="202"/>
    </location>
</feature>
<feature type="helix" evidence="39">
    <location>
        <begin position="204"/>
        <end position="206"/>
    </location>
</feature>
<feature type="strand" evidence="39">
    <location>
        <begin position="210"/>
        <end position="216"/>
    </location>
</feature>
<feature type="helix" evidence="39">
    <location>
        <begin position="224"/>
        <end position="249"/>
    </location>
</feature>
<feature type="strand" evidence="39">
    <location>
        <begin position="257"/>
        <end position="261"/>
    </location>
</feature>
<feature type="strand" evidence="39">
    <location>
        <begin position="265"/>
        <end position="274"/>
    </location>
</feature>
<feature type="helix" evidence="39">
    <location>
        <begin position="283"/>
        <end position="300"/>
    </location>
</feature>
<feature type="strand" evidence="39">
    <location>
        <begin position="304"/>
        <end position="308"/>
    </location>
</feature>
<feature type="strand" evidence="42">
    <location>
        <begin position="312"/>
        <end position="316"/>
    </location>
</feature>
<feature type="helix" evidence="39">
    <location>
        <begin position="320"/>
        <end position="337"/>
    </location>
</feature>
<feature type="strand" evidence="40">
    <location>
        <begin position="338"/>
        <end position="340"/>
    </location>
</feature>
<feature type="strand" evidence="39">
    <location>
        <begin position="345"/>
        <end position="352"/>
    </location>
</feature>
<feature type="helix" evidence="39">
    <location>
        <begin position="353"/>
        <end position="364"/>
    </location>
</feature>
<comment type="function">
    <text evidence="6 7 8 10 13">Variant histone H2A which replaces conventional H2A in a subset of nucleosomes where it represses transcription (PubMed:12718888, PubMed:15621527, PubMed:16428466). Nucleosomes wrap and compact DNA into chromatin, limiting DNA accessibility to the cellular machineries which require DNA as a template (PubMed:15897469). Histones thereby play a central role in transcription regulation, DNA repair, DNA replication and chromosomal stability (PubMed:15897469). DNA accessibility is regulated via a complex set of post-translational modifications of histones, also called histone code, and nucleosome remodeling. Involved in stable X chromosome inactivation (PubMed:15897469). Inhibits the binding of transcription factors, including NF-kappa-B, and interferes with the activity of remodeling SWI/SNF complexes (PubMed:12718888, PubMed:16428466). Inhibits histone acetylation by EP300 and recruits class I HDACs, which induces a hypoacetylated state of chromatin (PubMed:16107708, PubMed:16428466).</text>
</comment>
<comment type="function">
    <molecule>Isoform 1</molecule>
    <text evidence="3 9 16">Isoform that specifically binds poly-ADP-ribose and O-acetyl-ADP-ribose and plays a key role in NAD(+) metabolism (PubMed:15902274). Able to bind to the ends of poly-ADP-ribose chains created by PARP1 and cap them (By similarity). This prevents PARP1 from further addition of ADP-ribose and thus limits the consumption of nuclear NAD(+), allowing the cell to maintain proper NAD(+) levels in both the nucleus and the mitochondria to promote proper mitochondrial respiration (By similarity). Increases the expression of genes involved in redox metabolism, including SOD3 (PubMed:23022728).</text>
</comment>
<comment type="function">
    <molecule>Isoform 2</molecule>
    <text evidence="9 16">In contrast to isoform 1, does not bind poly-ADP-ribose (PubMed:15902274). Represses SOD3 gene expression (PubMed:23022728).</text>
</comment>
<comment type="subunit">
    <text evidence="8 10 14">The nucleosome is a histone octamer containing two molecules each of H2A, H2B, H3 and H4 assembled in one H3-H4 heterotetramer and two H2A-H2B heterodimers. Interacts with HDAC1 and HDAC2 (PubMed:16107708). Interacts with SPOP (PubMed:15897469, PubMed:19818708). Part of a complex consisting of MACROH2A1, CUL3 and SPOP (PubMed:15897469, PubMed:19818708).</text>
</comment>
<comment type="subunit">
    <molecule>Isoform 1</molecule>
    <text evidence="3">Interacts with PARP1.</text>
</comment>
<comment type="interaction">
    <interactant intactId="EBI-2868511">
        <id>O75367</id>
    </interactant>
    <interactant intactId="EBI-3867333">
        <id>A8MQ03</id>
        <label>CYSRT1</label>
    </interactant>
    <organismsDiffer>false</organismsDiffer>
    <experiments>3</experiments>
</comment>
<comment type="interaction">
    <interactant intactId="EBI-2868511">
        <id>O75367</id>
    </interactant>
    <interactant intactId="EBI-641062">
        <id>P04626</id>
        <label>ERBB2</label>
    </interactant>
    <organismsDiffer>false</organismsDiffer>
    <experiments>6</experiments>
</comment>
<comment type="interaction">
    <interactant intactId="EBI-2868511">
        <id>O75367</id>
    </interactant>
    <interactant intactId="EBI-2682520">
        <id>A1L162</id>
        <label>ERICH2</label>
    </interactant>
    <organismsDiffer>false</organismsDiffer>
    <experiments>6</experiments>
</comment>
<comment type="interaction">
    <interactant intactId="EBI-2868511">
        <id>O75367</id>
    </interactant>
    <interactant intactId="EBI-10268158">
        <id>Q8N9E0</id>
        <label>FAM133A</label>
    </interactant>
    <organismsDiffer>false</organismsDiffer>
    <experiments>3</experiments>
</comment>
<comment type="interaction">
    <interactant intactId="EBI-2868511">
        <id>O75367</id>
    </interactant>
    <interactant intactId="EBI-12142839">
        <id>U3KQK0</id>
        <label>H2BC15</label>
    </interactant>
    <organismsDiffer>false</organismsDiffer>
    <experiments>6</experiments>
</comment>
<comment type="interaction">
    <interactant intactId="EBI-2868511">
        <id>O75367</id>
    </interactant>
    <interactant intactId="EBI-10171774">
        <id>P60410</id>
        <label>KRTAP10-8</label>
    </interactant>
    <organismsDiffer>false</organismsDiffer>
    <experiments>3</experiments>
</comment>
<comment type="interaction">
    <interactant intactId="EBI-2868511">
        <id>O75367</id>
    </interactant>
    <interactant intactId="EBI-751711">
        <id>P61244</id>
        <label>MAX</label>
    </interactant>
    <organismsDiffer>false</organismsDiffer>
    <experiments>2</experiments>
</comment>
<comment type="interaction">
    <interactant intactId="EBI-2868511">
        <id>O75367</id>
    </interactant>
    <interactant intactId="EBI-3920396">
        <id>Q6ZUT1</id>
        <label>NKAPD1</label>
    </interactant>
    <organismsDiffer>false</organismsDiffer>
    <experiments>3</experiments>
</comment>
<comment type="interaction">
    <interactant intactId="EBI-2868511">
        <id>O75367</id>
    </interactant>
    <interactant intactId="EBI-10268630">
        <id>Q8N9Q2</id>
        <label>SREK1IP1</label>
    </interactant>
    <organismsDiffer>false</organismsDiffer>
    <experiments>3</experiments>
</comment>
<comment type="interaction">
    <interactant intactId="EBI-2868511">
        <id>O75367</id>
    </interactant>
    <interactant intactId="EBI-355744">
        <id>Q12933</id>
        <label>TRAF2</label>
    </interactant>
    <organismsDiffer>false</organismsDiffer>
    <experiments>3</experiments>
</comment>
<comment type="interaction">
    <interactant intactId="EBI-2868511">
        <id>O75367</id>
    </interactant>
    <interactant intactId="EBI-2341136">
        <id>Q12899</id>
        <label>TRIM26</label>
    </interactant>
    <organismsDiffer>false</organismsDiffer>
    <experiments>3</experiments>
</comment>
<comment type="interaction">
    <interactant intactId="EBI-2868511">
        <id>O75367</id>
    </interactant>
    <interactant intactId="EBI-11983741">
        <id>Q3SXR9</id>
        <label>VCX2</label>
    </interactant>
    <organismsDiffer>false</organismsDiffer>
    <experiments>3</experiments>
</comment>
<comment type="interaction">
    <interactant intactId="EBI-2868511">
        <id>O75367</id>
    </interactant>
    <interactant intactId="EBI-2687480">
        <id>Q969S3</id>
        <label>ZNF622</label>
    </interactant>
    <organismsDiffer>false</organismsDiffer>
    <experiments>3</experiments>
</comment>
<comment type="interaction">
    <interactant intactId="EBI-6249599">
        <id>O75367-2</id>
    </interactant>
    <interactant intactId="EBI-396461">
        <id>P46100</id>
        <label>ATRX</label>
    </interactant>
    <organismsDiffer>false</organismsDiffer>
    <experiments>2</experiments>
</comment>
<comment type="interaction">
    <interactant intactId="EBI-6249599">
        <id>O75367-2</id>
    </interactant>
    <interactant intactId="EBI-1105254">
        <id>O95271</id>
        <label>TNKS</label>
    </interactant>
    <organismsDiffer>false</organismsDiffer>
    <experiments>6</experiments>
</comment>
<comment type="interaction">
    <interactant intactId="EBI-6250866">
        <id>O75367-3</id>
    </interactant>
    <interactant intactId="EBI-641062">
        <id>P04626</id>
        <label>ERBB2</label>
    </interactant>
    <organismsDiffer>false</organismsDiffer>
    <experiments>3</experiments>
</comment>
<comment type="subcellular location">
    <subcellularLocation>
        <location evidence="7 8 19">Nucleus</location>
    </subcellularLocation>
    <subcellularLocation>
        <location evidence="7 8 15 18 19">Chromosome</location>
    </subcellularLocation>
    <text evidence="7 8 15 18 19">Enriched in inactive X chromosome chromatin and in senescence-associated heterochromatin (PubMed:15621527, PubMed:15897469, PubMed:9634239). Recruited to DNA damage sites in an APLF-dependent manner (PubMed:21211722, PubMed:29905837).</text>
</comment>
<comment type="alternative products">
    <event type="alternative splicing"/>
    <isoform>
        <id>O75367-2</id>
        <name>1</name>
        <name evidence="24">mH2A1.1</name>
        <sequence type="displayed"/>
    </isoform>
    <isoform>
        <id>O75367-1</id>
        <name>2</name>
        <name evidence="24">mH2A1.2</name>
        <sequence type="described" ref="VSP_061610"/>
    </isoform>
    <isoform>
        <id>O75367-3</id>
        <name>3</name>
        <sequence type="described" ref="VSP_061609 VSP_061610"/>
    </isoform>
</comment>
<comment type="tissue specificity">
    <text evidence="20">Widely expressed.</text>
</comment>
<comment type="domain">
    <molecule>Isoform 1</molecule>
    <text evidence="9">The macro domain specifically binds poly-ADP-ribose.</text>
</comment>
<comment type="PTM">
    <text evidence="8 11 14">Monoubiquitinated at either Lys-116 or Lys-117. May also be polyubiquitinated. Ubiquitination is mediated by the CUL3/SPOP E3 complex and does not promote proteasomal degradation. Instead, it is required for enrichment in inactive X chromosome chromatin.</text>
</comment>
<comment type="miscellaneous">
    <molecule>Isoform 2</molecule>
    <text evidence="16">The preferential expression of isoform 2 over that of isoform 1 requires the presence of DDX5/DDX17.</text>
</comment>
<comment type="miscellaneous">
    <molecule>Isoform 1</molecule>
    <text evidence="16">Preferentially expressed over isoform 2 in the absence of DDX5/DDX17.</text>
</comment>
<comment type="similarity">
    <text evidence="27">Belongs to the histone H2A family.</text>
</comment>
<comment type="caution">
    <molecule>Isoform 1</molecule>
    <text evidence="17">In contrast to other Macro-domain containing proteins, lacks ADP-ribose glycohydrolase activity.</text>
</comment>
<proteinExistence type="evidence at protein level"/>
<protein>
    <recommendedName>
        <fullName>Core histone macro-H2A.1</fullName>
        <shortName>Histone macroH2A1</shortName>
        <shortName>mH2A1</shortName>
    </recommendedName>
    <alternativeName>
        <fullName>Histone H2A.y</fullName>
        <shortName>H2A/y</shortName>
    </alternativeName>
    <alternativeName>
        <fullName>Medulloblastoma antigen MU-MB-50.205</fullName>
    </alternativeName>
</protein>
<keyword id="KW-0002">3D-structure</keyword>
<keyword id="KW-0007">Acetylation</keyword>
<keyword id="KW-0025">Alternative splicing</keyword>
<keyword id="KW-0156">Chromatin regulator</keyword>
<keyword id="KW-0158">Chromosome</keyword>
<keyword id="KW-0238">DNA-binding</keyword>
<keyword id="KW-1017">Isopeptide bond</keyword>
<keyword id="KW-0488">Methylation</keyword>
<keyword id="KW-0544">Nucleosome core</keyword>
<keyword id="KW-0539">Nucleus</keyword>
<keyword id="KW-0597">Phosphoprotein</keyword>
<keyword id="KW-1267">Proteomics identification</keyword>
<keyword id="KW-1185">Reference proteome</keyword>
<keyword id="KW-0832">Ubl conjugation</keyword>